<reference key="1">
    <citation type="journal article" date="1998" name="Science">
        <title>Genome sequence of the nematode C. elegans: a platform for investigating biology.</title>
        <authorList>
            <consortium name="The C. elegans sequencing consortium"/>
        </authorList>
    </citation>
    <scope>NUCLEOTIDE SEQUENCE [LARGE SCALE GENOMIC DNA]</scope>
    <source>
        <strain>Bristol N2</strain>
    </source>
</reference>
<proteinExistence type="predicted"/>
<accession>Q09370</accession>
<gene>
    <name type="ORF">ZK177.1</name>
</gene>
<dbReference type="EMBL" id="FO080583">
    <property type="protein sequence ID" value="CCD64855.2"/>
    <property type="molecule type" value="Genomic_DNA"/>
</dbReference>
<dbReference type="PIR" id="T27770">
    <property type="entry name" value="T27770"/>
</dbReference>
<dbReference type="RefSeq" id="NP_495060.2">
    <property type="nucleotide sequence ID" value="NM_062659.7"/>
</dbReference>
<dbReference type="STRING" id="6239.ZK177.1.1"/>
<dbReference type="PaxDb" id="6239-ZK177.1"/>
<dbReference type="EnsemblMetazoa" id="ZK177.1.1">
    <property type="protein sequence ID" value="ZK177.1.1"/>
    <property type="gene ID" value="WBGene00022669"/>
</dbReference>
<dbReference type="GeneID" id="173938"/>
<dbReference type="KEGG" id="cel:CELE_ZK177.1"/>
<dbReference type="UCSC" id="ZK177.1">
    <property type="organism name" value="c. elegans"/>
</dbReference>
<dbReference type="AGR" id="WB:WBGene00022669"/>
<dbReference type="CTD" id="173938"/>
<dbReference type="WormBase" id="ZK177.1">
    <property type="protein sequence ID" value="CE46679"/>
    <property type="gene ID" value="WBGene00022669"/>
</dbReference>
<dbReference type="HOGENOM" id="CLU_840012_0_0_1"/>
<dbReference type="InParanoid" id="Q09370"/>
<dbReference type="PRO" id="PR:Q09370"/>
<dbReference type="Proteomes" id="UP000001940">
    <property type="component" value="Chromosome II"/>
</dbReference>
<dbReference type="Bgee" id="WBGene00022669">
    <property type="expression patterns" value="Expressed in embryo and 4 other cell types or tissues"/>
</dbReference>
<organism>
    <name type="scientific">Caenorhabditis elegans</name>
    <dbReference type="NCBI Taxonomy" id="6239"/>
    <lineage>
        <taxon>Eukaryota</taxon>
        <taxon>Metazoa</taxon>
        <taxon>Ecdysozoa</taxon>
        <taxon>Nematoda</taxon>
        <taxon>Chromadorea</taxon>
        <taxon>Rhabditida</taxon>
        <taxon>Rhabditina</taxon>
        <taxon>Rhabditomorpha</taxon>
        <taxon>Rhabditoidea</taxon>
        <taxon>Rhabditidae</taxon>
        <taxon>Peloderinae</taxon>
        <taxon>Caenorhabditis</taxon>
    </lineage>
</organism>
<feature type="chain" id="PRO_0000065504" description="Uncharacterized protein ZK177.1">
    <location>
        <begin position="1"/>
        <end position="331"/>
    </location>
</feature>
<feature type="region of interest" description="Disordered" evidence="1">
    <location>
        <begin position="131"/>
        <end position="163"/>
    </location>
</feature>
<feature type="region of interest" description="Disordered" evidence="1">
    <location>
        <begin position="190"/>
        <end position="209"/>
    </location>
</feature>
<feature type="compositionally biased region" description="Basic residues" evidence="1">
    <location>
        <begin position="140"/>
        <end position="162"/>
    </location>
</feature>
<feature type="compositionally biased region" description="Polar residues" evidence="1">
    <location>
        <begin position="195"/>
        <end position="209"/>
    </location>
</feature>
<evidence type="ECO:0000256" key="1">
    <source>
        <dbReference type="SAM" id="MobiDB-lite"/>
    </source>
</evidence>
<name>YS41_CAEEL</name>
<protein>
    <recommendedName>
        <fullName>Uncharacterized protein ZK177.1</fullName>
    </recommendedName>
</protein>
<sequence>MALQQGGDYYGTSNVVAQKFYRGQDNQRPAGCVLPSIDCLLHDKTTYSGNRDYNNENSKGFAEANGHEIFDPQGFKETVSICDRRALEAPPHQNYPVQNLNGMGGAFYNSDSNGQQFVQSYDNLPFGKIKISHASDQKSRPKPTKPRASRKRAAIAQSKKKRSGGDLTLDGLVQLLGEIVDPVKLQAEIDEQKSRQSTSQPDKEIVQSSQYSHNGFIQHASPQIYNYNYQGYTMVQAEAYQPQYQEHVQYTQYSQGPINQTNIQEVQSEDSEGIYEYFVDQPNYSNQGTNQGTCQGFIQINGNFQENVQIVSQDNVQGSSQGYIQEYYQYE</sequence>
<keyword id="KW-1185">Reference proteome</keyword>